<protein>
    <recommendedName>
        <fullName evidence="1">Large ribosomal subunit protein bL27</fullName>
    </recommendedName>
    <alternativeName>
        <fullName evidence="3">50S ribosomal protein L27</fullName>
    </alternativeName>
</protein>
<dbReference type="EMBL" id="CP000453">
    <property type="protein sequence ID" value="ABI56200.1"/>
    <property type="molecule type" value="Genomic_DNA"/>
</dbReference>
<dbReference type="RefSeq" id="WP_011628595.1">
    <property type="nucleotide sequence ID" value="NC_008340.1"/>
</dbReference>
<dbReference type="SMR" id="Q0AAD7"/>
<dbReference type="KEGG" id="aeh:Mlg_0846"/>
<dbReference type="eggNOG" id="COG0211">
    <property type="taxonomic scope" value="Bacteria"/>
</dbReference>
<dbReference type="HOGENOM" id="CLU_095424_4_1_6"/>
<dbReference type="OrthoDB" id="9803474at2"/>
<dbReference type="Proteomes" id="UP000001962">
    <property type="component" value="Chromosome"/>
</dbReference>
<dbReference type="GO" id="GO:0022625">
    <property type="term" value="C:cytosolic large ribosomal subunit"/>
    <property type="evidence" value="ECO:0007669"/>
    <property type="project" value="TreeGrafter"/>
</dbReference>
<dbReference type="GO" id="GO:0003735">
    <property type="term" value="F:structural constituent of ribosome"/>
    <property type="evidence" value="ECO:0007669"/>
    <property type="project" value="InterPro"/>
</dbReference>
<dbReference type="GO" id="GO:0006412">
    <property type="term" value="P:translation"/>
    <property type="evidence" value="ECO:0007669"/>
    <property type="project" value="UniProtKB-UniRule"/>
</dbReference>
<dbReference type="FunFam" id="2.40.50.100:FF:000001">
    <property type="entry name" value="50S ribosomal protein L27"/>
    <property type="match status" value="1"/>
</dbReference>
<dbReference type="Gene3D" id="2.40.50.100">
    <property type="match status" value="1"/>
</dbReference>
<dbReference type="HAMAP" id="MF_00539">
    <property type="entry name" value="Ribosomal_bL27"/>
    <property type="match status" value="1"/>
</dbReference>
<dbReference type="InterPro" id="IPR001684">
    <property type="entry name" value="Ribosomal_bL27"/>
</dbReference>
<dbReference type="InterPro" id="IPR018261">
    <property type="entry name" value="Ribosomal_bL27_CS"/>
</dbReference>
<dbReference type="NCBIfam" id="TIGR00062">
    <property type="entry name" value="L27"/>
    <property type="match status" value="1"/>
</dbReference>
<dbReference type="PANTHER" id="PTHR15893:SF0">
    <property type="entry name" value="LARGE RIBOSOMAL SUBUNIT PROTEIN BL27M"/>
    <property type="match status" value="1"/>
</dbReference>
<dbReference type="PANTHER" id="PTHR15893">
    <property type="entry name" value="RIBOSOMAL PROTEIN L27"/>
    <property type="match status" value="1"/>
</dbReference>
<dbReference type="Pfam" id="PF01016">
    <property type="entry name" value="Ribosomal_L27"/>
    <property type="match status" value="1"/>
</dbReference>
<dbReference type="PRINTS" id="PR00063">
    <property type="entry name" value="RIBOSOMALL27"/>
</dbReference>
<dbReference type="SUPFAM" id="SSF110324">
    <property type="entry name" value="Ribosomal L27 protein-like"/>
    <property type="match status" value="1"/>
</dbReference>
<dbReference type="PROSITE" id="PS00831">
    <property type="entry name" value="RIBOSOMAL_L27"/>
    <property type="match status" value="1"/>
</dbReference>
<sequence>MAHKKAGGSTRNGRDSESKRLGVKRFGGQNVLAGNILVRQRGTHFHAGENVGLGKDHTLFAKADGQVVFERKGPRNRRYVSVRTVQ</sequence>
<gene>
    <name evidence="1" type="primary">rpmA</name>
    <name type="ordered locus">Mlg_0846</name>
</gene>
<proteinExistence type="inferred from homology"/>
<keyword id="KW-1185">Reference proteome</keyword>
<keyword id="KW-0687">Ribonucleoprotein</keyword>
<keyword id="KW-0689">Ribosomal protein</keyword>
<organism>
    <name type="scientific">Alkalilimnicola ehrlichii (strain ATCC BAA-1101 / DSM 17681 / MLHE-1)</name>
    <dbReference type="NCBI Taxonomy" id="187272"/>
    <lineage>
        <taxon>Bacteria</taxon>
        <taxon>Pseudomonadati</taxon>
        <taxon>Pseudomonadota</taxon>
        <taxon>Gammaproteobacteria</taxon>
        <taxon>Chromatiales</taxon>
        <taxon>Ectothiorhodospiraceae</taxon>
        <taxon>Alkalilimnicola</taxon>
    </lineage>
</organism>
<feature type="chain" id="PRO_1000017402" description="Large ribosomal subunit protein bL27">
    <location>
        <begin position="1"/>
        <end position="86"/>
    </location>
</feature>
<feature type="region of interest" description="Disordered" evidence="2">
    <location>
        <begin position="1"/>
        <end position="23"/>
    </location>
</feature>
<reference key="1">
    <citation type="submission" date="2006-08" db="EMBL/GenBank/DDBJ databases">
        <title>Complete sequence of Alkalilimnicola ehrilichei MLHE-1.</title>
        <authorList>
            <person name="Copeland A."/>
            <person name="Lucas S."/>
            <person name="Lapidus A."/>
            <person name="Barry K."/>
            <person name="Detter J.C."/>
            <person name="Glavina del Rio T."/>
            <person name="Hammon N."/>
            <person name="Israni S."/>
            <person name="Dalin E."/>
            <person name="Tice H."/>
            <person name="Pitluck S."/>
            <person name="Sims D."/>
            <person name="Brettin T."/>
            <person name="Bruce D."/>
            <person name="Han C."/>
            <person name="Tapia R."/>
            <person name="Gilna P."/>
            <person name="Schmutz J."/>
            <person name="Larimer F."/>
            <person name="Land M."/>
            <person name="Hauser L."/>
            <person name="Kyrpides N."/>
            <person name="Mikhailova N."/>
            <person name="Oremland R.S."/>
            <person name="Hoeft S.E."/>
            <person name="Switzer-Blum J."/>
            <person name="Kulp T."/>
            <person name="King G."/>
            <person name="Tabita R."/>
            <person name="Witte B."/>
            <person name="Santini J.M."/>
            <person name="Basu P."/>
            <person name="Hollibaugh J.T."/>
            <person name="Xie G."/>
            <person name="Stolz J.F."/>
            <person name="Richardson P."/>
        </authorList>
    </citation>
    <scope>NUCLEOTIDE SEQUENCE [LARGE SCALE GENOMIC DNA]</scope>
    <source>
        <strain>ATCC BAA-1101 / DSM 17681 / MLHE-1</strain>
    </source>
</reference>
<accession>Q0AAD7</accession>
<name>RL27_ALKEH</name>
<comment type="similarity">
    <text evidence="1">Belongs to the bacterial ribosomal protein bL27 family.</text>
</comment>
<evidence type="ECO:0000255" key="1">
    <source>
        <dbReference type="HAMAP-Rule" id="MF_00539"/>
    </source>
</evidence>
<evidence type="ECO:0000256" key="2">
    <source>
        <dbReference type="SAM" id="MobiDB-lite"/>
    </source>
</evidence>
<evidence type="ECO:0000305" key="3"/>